<gene>
    <name evidence="1" type="primary">rph</name>
    <name type="ordered locus">Mkms_3918</name>
</gene>
<feature type="chain" id="PRO_1000024832" description="Ribonuclease PH">
    <location>
        <begin position="1"/>
        <end position="260"/>
    </location>
</feature>
<feature type="binding site" evidence="1">
    <location>
        <position position="88"/>
    </location>
    <ligand>
        <name>phosphate</name>
        <dbReference type="ChEBI" id="CHEBI:43474"/>
        <note>substrate</note>
    </ligand>
</feature>
<feature type="binding site" evidence="1">
    <location>
        <begin position="126"/>
        <end position="128"/>
    </location>
    <ligand>
        <name>phosphate</name>
        <dbReference type="ChEBI" id="CHEBI:43474"/>
        <note>substrate</note>
    </ligand>
</feature>
<keyword id="KW-0548">Nucleotidyltransferase</keyword>
<keyword id="KW-0694">RNA-binding</keyword>
<keyword id="KW-0698">rRNA processing</keyword>
<keyword id="KW-0808">Transferase</keyword>
<keyword id="KW-0819">tRNA processing</keyword>
<keyword id="KW-0820">tRNA-binding</keyword>
<sequence length="260" mass="27647">MSRREDGRLDDELRPVRITRGFTSHPAGSVLVEFGETRVMCTASVTEGVPRWRKGTGQGWLTAEYAMLPAATHDRSDRESVKGRVGGRTQEISRLIGRSLRACIDLNALGENTIAIDCDVLQADGGTRTAAITGAYVALADAVTYLAAAEKLSDPRPLSCAIAAVSVGVVDGRVRVDLPYSEDSRAEVDMNVVATDTGTLVEIQGTGEGATFPRSTLDKLLDLALASCDQLFVVQREALDAPYPGALPEPTSPPKKAFGS</sequence>
<organism>
    <name type="scientific">Mycobacterium sp. (strain KMS)</name>
    <dbReference type="NCBI Taxonomy" id="189918"/>
    <lineage>
        <taxon>Bacteria</taxon>
        <taxon>Bacillati</taxon>
        <taxon>Actinomycetota</taxon>
        <taxon>Actinomycetes</taxon>
        <taxon>Mycobacteriales</taxon>
        <taxon>Mycobacteriaceae</taxon>
        <taxon>Mycobacterium</taxon>
    </lineage>
</organism>
<evidence type="ECO:0000255" key="1">
    <source>
        <dbReference type="HAMAP-Rule" id="MF_00564"/>
    </source>
</evidence>
<dbReference type="EC" id="2.7.7.56" evidence="1"/>
<dbReference type="EMBL" id="CP000518">
    <property type="protein sequence ID" value="ABL93110.1"/>
    <property type="molecule type" value="Genomic_DNA"/>
</dbReference>
<dbReference type="SMR" id="A1UJV2"/>
<dbReference type="STRING" id="189918.Mkms_3918"/>
<dbReference type="KEGG" id="mkm:Mkms_3918"/>
<dbReference type="HOGENOM" id="CLU_050858_0_0_11"/>
<dbReference type="OrthoDB" id="9802265at2"/>
<dbReference type="GO" id="GO:0000175">
    <property type="term" value="F:3'-5'-RNA exonuclease activity"/>
    <property type="evidence" value="ECO:0007669"/>
    <property type="project" value="UniProtKB-UniRule"/>
</dbReference>
<dbReference type="GO" id="GO:0000049">
    <property type="term" value="F:tRNA binding"/>
    <property type="evidence" value="ECO:0007669"/>
    <property type="project" value="UniProtKB-UniRule"/>
</dbReference>
<dbReference type="GO" id="GO:0009022">
    <property type="term" value="F:tRNA nucleotidyltransferase activity"/>
    <property type="evidence" value="ECO:0007669"/>
    <property type="project" value="UniProtKB-UniRule"/>
</dbReference>
<dbReference type="GO" id="GO:0016075">
    <property type="term" value="P:rRNA catabolic process"/>
    <property type="evidence" value="ECO:0007669"/>
    <property type="project" value="UniProtKB-UniRule"/>
</dbReference>
<dbReference type="GO" id="GO:0006364">
    <property type="term" value="P:rRNA processing"/>
    <property type="evidence" value="ECO:0007669"/>
    <property type="project" value="UniProtKB-KW"/>
</dbReference>
<dbReference type="GO" id="GO:0008033">
    <property type="term" value="P:tRNA processing"/>
    <property type="evidence" value="ECO:0007669"/>
    <property type="project" value="UniProtKB-UniRule"/>
</dbReference>
<dbReference type="FunFam" id="3.30.230.70:FF:000003">
    <property type="entry name" value="Ribonuclease PH"/>
    <property type="match status" value="1"/>
</dbReference>
<dbReference type="Gene3D" id="3.30.230.70">
    <property type="entry name" value="GHMP Kinase, N-terminal domain"/>
    <property type="match status" value="1"/>
</dbReference>
<dbReference type="HAMAP" id="MF_00564">
    <property type="entry name" value="RNase_PH"/>
    <property type="match status" value="1"/>
</dbReference>
<dbReference type="InterPro" id="IPR001247">
    <property type="entry name" value="ExoRNase_PH_dom1"/>
</dbReference>
<dbReference type="InterPro" id="IPR015847">
    <property type="entry name" value="ExoRNase_PH_dom2"/>
</dbReference>
<dbReference type="InterPro" id="IPR036345">
    <property type="entry name" value="ExoRNase_PH_dom2_sf"/>
</dbReference>
<dbReference type="InterPro" id="IPR027408">
    <property type="entry name" value="PNPase/RNase_PH_dom_sf"/>
</dbReference>
<dbReference type="InterPro" id="IPR020568">
    <property type="entry name" value="Ribosomal_Su5_D2-typ_SF"/>
</dbReference>
<dbReference type="InterPro" id="IPR050080">
    <property type="entry name" value="RNase_PH"/>
</dbReference>
<dbReference type="InterPro" id="IPR002381">
    <property type="entry name" value="RNase_PH_bac-type"/>
</dbReference>
<dbReference type="InterPro" id="IPR018336">
    <property type="entry name" value="RNase_PH_CS"/>
</dbReference>
<dbReference type="NCBIfam" id="TIGR01966">
    <property type="entry name" value="RNasePH"/>
    <property type="match status" value="1"/>
</dbReference>
<dbReference type="PANTHER" id="PTHR11953">
    <property type="entry name" value="EXOSOME COMPLEX COMPONENT"/>
    <property type="match status" value="1"/>
</dbReference>
<dbReference type="PANTHER" id="PTHR11953:SF0">
    <property type="entry name" value="EXOSOME COMPLEX COMPONENT RRP41"/>
    <property type="match status" value="1"/>
</dbReference>
<dbReference type="Pfam" id="PF01138">
    <property type="entry name" value="RNase_PH"/>
    <property type="match status" value="1"/>
</dbReference>
<dbReference type="Pfam" id="PF03725">
    <property type="entry name" value="RNase_PH_C"/>
    <property type="match status" value="1"/>
</dbReference>
<dbReference type="SUPFAM" id="SSF55666">
    <property type="entry name" value="Ribonuclease PH domain 2-like"/>
    <property type="match status" value="1"/>
</dbReference>
<dbReference type="SUPFAM" id="SSF54211">
    <property type="entry name" value="Ribosomal protein S5 domain 2-like"/>
    <property type="match status" value="1"/>
</dbReference>
<dbReference type="PROSITE" id="PS01277">
    <property type="entry name" value="RIBONUCLEASE_PH"/>
    <property type="match status" value="1"/>
</dbReference>
<accession>A1UJV2</accession>
<protein>
    <recommendedName>
        <fullName evidence="1">Ribonuclease PH</fullName>
        <shortName evidence="1">RNase PH</shortName>
        <ecNumber evidence="1">2.7.7.56</ecNumber>
    </recommendedName>
    <alternativeName>
        <fullName evidence="1">tRNA nucleotidyltransferase</fullName>
    </alternativeName>
</protein>
<comment type="function">
    <text evidence="1">Phosphorolytic 3'-5' exoribonuclease that plays an important role in tRNA 3'-end maturation. Removes nucleotide residues following the 3'-CCA terminus of tRNAs; can also add nucleotides to the ends of RNA molecules by using nucleoside diphosphates as substrates, but this may not be physiologically important. Probably plays a role in initiation of 16S rRNA degradation (leading to ribosome degradation) during starvation.</text>
</comment>
<comment type="catalytic activity">
    <reaction evidence="1">
        <text>tRNA(n+1) + phosphate = tRNA(n) + a ribonucleoside 5'-diphosphate</text>
        <dbReference type="Rhea" id="RHEA:10628"/>
        <dbReference type="Rhea" id="RHEA-COMP:17343"/>
        <dbReference type="Rhea" id="RHEA-COMP:17344"/>
        <dbReference type="ChEBI" id="CHEBI:43474"/>
        <dbReference type="ChEBI" id="CHEBI:57930"/>
        <dbReference type="ChEBI" id="CHEBI:173114"/>
        <dbReference type="EC" id="2.7.7.56"/>
    </reaction>
</comment>
<comment type="subunit">
    <text evidence="1">Homohexameric ring arranged as a trimer of dimers.</text>
</comment>
<comment type="similarity">
    <text evidence="1">Belongs to the RNase PH family.</text>
</comment>
<reference key="1">
    <citation type="submission" date="2006-12" db="EMBL/GenBank/DDBJ databases">
        <title>Complete sequence of chromosome of Mycobacterium sp. KMS.</title>
        <authorList>
            <consortium name="US DOE Joint Genome Institute"/>
            <person name="Copeland A."/>
            <person name="Lucas S."/>
            <person name="Lapidus A."/>
            <person name="Barry K."/>
            <person name="Detter J.C."/>
            <person name="Glavina del Rio T."/>
            <person name="Hammon N."/>
            <person name="Israni S."/>
            <person name="Dalin E."/>
            <person name="Tice H."/>
            <person name="Pitluck S."/>
            <person name="Kiss H."/>
            <person name="Brettin T."/>
            <person name="Bruce D."/>
            <person name="Han C."/>
            <person name="Tapia R."/>
            <person name="Gilna P."/>
            <person name="Schmutz J."/>
            <person name="Larimer F."/>
            <person name="Land M."/>
            <person name="Hauser L."/>
            <person name="Kyrpides N."/>
            <person name="Mikhailova N."/>
            <person name="Miller C.D."/>
            <person name="Richardson P."/>
        </authorList>
    </citation>
    <scope>NUCLEOTIDE SEQUENCE [LARGE SCALE GENOMIC DNA]</scope>
    <source>
        <strain>KMS</strain>
    </source>
</reference>
<proteinExistence type="inferred from homology"/>
<name>RNPH_MYCSK</name>